<comment type="function">
    <text evidence="1">Catalyzes the thiamine diphosphate-dependent decarboxylation of 2-oxoglutarate and the subsequent addition of the resulting succinic semialdehyde-thiamine pyrophosphate anion to isochorismate to yield 2-succinyl-5-enolpyruvyl-6-hydroxy-3-cyclohexene-1-carboxylate (SEPHCHC).</text>
</comment>
<comment type="catalytic activity">
    <reaction evidence="1">
        <text>isochorismate + 2-oxoglutarate + H(+) = 5-enolpyruvoyl-6-hydroxy-2-succinyl-cyclohex-3-ene-1-carboxylate + CO2</text>
        <dbReference type="Rhea" id="RHEA:25593"/>
        <dbReference type="ChEBI" id="CHEBI:15378"/>
        <dbReference type="ChEBI" id="CHEBI:16526"/>
        <dbReference type="ChEBI" id="CHEBI:16810"/>
        <dbReference type="ChEBI" id="CHEBI:29780"/>
        <dbReference type="ChEBI" id="CHEBI:58818"/>
        <dbReference type="EC" id="2.2.1.9"/>
    </reaction>
</comment>
<comment type="cofactor">
    <cofactor evidence="1">
        <name>Mg(2+)</name>
        <dbReference type="ChEBI" id="CHEBI:18420"/>
    </cofactor>
    <cofactor evidence="1">
        <name>Mn(2+)</name>
        <dbReference type="ChEBI" id="CHEBI:29035"/>
    </cofactor>
</comment>
<comment type="cofactor">
    <cofactor evidence="1">
        <name>thiamine diphosphate</name>
        <dbReference type="ChEBI" id="CHEBI:58937"/>
    </cofactor>
    <text evidence="1">Binds 1 thiamine pyrophosphate per subunit.</text>
</comment>
<comment type="pathway">
    <text evidence="1">Quinol/quinone metabolism; 1,4-dihydroxy-2-naphthoate biosynthesis; 1,4-dihydroxy-2-naphthoate from chorismate: step 2/7.</text>
</comment>
<comment type="pathway">
    <text evidence="1">Quinol/quinone metabolism; menaquinone biosynthesis.</text>
</comment>
<comment type="subunit">
    <text evidence="1">Homodimer.</text>
</comment>
<comment type="similarity">
    <text evidence="1">Belongs to the TPP enzyme family. MenD subfamily.</text>
</comment>
<protein>
    <recommendedName>
        <fullName evidence="1">2-succinyl-5-enolpyruvyl-6-hydroxy-3-cyclohexene-1-carboxylate synthase</fullName>
        <shortName evidence="1">SEPHCHC synthase</shortName>
        <ecNumber evidence="1">2.2.1.9</ecNumber>
    </recommendedName>
    <alternativeName>
        <fullName evidence="1">Menaquinone biosynthesis protein MenD</fullName>
    </alternativeName>
</protein>
<gene>
    <name evidence="1" type="primary">menD</name>
    <name type="ordered locus">CMM_2812</name>
</gene>
<reference key="1">
    <citation type="journal article" date="2008" name="J. Bacteriol.">
        <title>The genome sequence of the tomato-pathogenic actinomycete Clavibacter michiganensis subsp. michiganensis NCPPB382 reveals a large island involved in pathogenicity.</title>
        <authorList>
            <person name="Gartemann K.-H."/>
            <person name="Abt B."/>
            <person name="Bekel T."/>
            <person name="Burger A."/>
            <person name="Engemann J."/>
            <person name="Fluegel M."/>
            <person name="Gaigalat L."/>
            <person name="Goesmann A."/>
            <person name="Graefen I."/>
            <person name="Kalinowski J."/>
            <person name="Kaup O."/>
            <person name="Kirchner O."/>
            <person name="Krause L."/>
            <person name="Linke B."/>
            <person name="McHardy A."/>
            <person name="Meyer F."/>
            <person name="Pohle S."/>
            <person name="Rueckert C."/>
            <person name="Schneiker S."/>
            <person name="Zellermann E.-M."/>
            <person name="Puehler A."/>
            <person name="Eichenlaub R."/>
            <person name="Kaiser O."/>
            <person name="Bartels D."/>
        </authorList>
    </citation>
    <scope>NUCLEOTIDE SEQUENCE [LARGE SCALE GENOMIC DNA]</scope>
    <source>
        <strain>NCPPB 382</strain>
    </source>
</reference>
<proteinExistence type="inferred from homology"/>
<accession>A5CUV9</accession>
<evidence type="ECO:0000255" key="1">
    <source>
        <dbReference type="HAMAP-Rule" id="MF_01659"/>
    </source>
</evidence>
<evidence type="ECO:0000256" key="2">
    <source>
        <dbReference type="SAM" id="MobiDB-lite"/>
    </source>
</evidence>
<keyword id="KW-0460">Magnesium</keyword>
<keyword id="KW-0464">Manganese</keyword>
<keyword id="KW-0474">Menaquinone biosynthesis</keyword>
<keyword id="KW-0479">Metal-binding</keyword>
<keyword id="KW-0786">Thiamine pyrophosphate</keyword>
<keyword id="KW-0808">Transferase</keyword>
<sequence>MTTTGSLPAQPSSTSPRTGNPSTDRALAMLLALVREGVTDVVLCPGSRSQALALVAAELERVDGVRLHVRIDERAAGFLALGLGVESGRPAPVITTSGTAVANLHPAVLEGWHSGVPMLLLTGDRPAELRGIASNQTTRQPGMFGDRVVVVDVPAPEETDEDLSRDARLARDAYRRARDERTPVHVNVAFRDPLSVAVPDLAEAVAEAHAAADAEAAAAPAPAGPTAADVLDLPHGPRTLVVAGHAAGEAAEELARAGGWPLAAEISSGSHFGPNLVVSFRELLARPGFGDRVERVIVFGHPTLTREVPLLVGREDVEAIVVGSTGGEDYDPRHRVTAHPAAVRVVGEPADPAEARRWTGTWVQASRAILDEASAAESAPLLPSGTTPAERRDFARAELAAVRADVTRRHLVRALWQATWPHDRLVLGASRLIREADRALPGKRVRVHANRGLAGIDGTISTGLGIALASQAGSGSAAAGITRVLVGDLTLLHDVGSLLIGTGERVPRIQVIVGNDGGGTIFDGLEVANTAAPAAIDRVMFTPQRVDLASLAKAYGWTHLRAATHGELEAALTTASGAPLLIEVPLVR</sequence>
<organism>
    <name type="scientific">Clavibacter michiganensis subsp. michiganensis (strain NCPPB 382)</name>
    <dbReference type="NCBI Taxonomy" id="443906"/>
    <lineage>
        <taxon>Bacteria</taxon>
        <taxon>Bacillati</taxon>
        <taxon>Actinomycetota</taxon>
        <taxon>Actinomycetes</taxon>
        <taxon>Micrococcales</taxon>
        <taxon>Microbacteriaceae</taxon>
        <taxon>Clavibacter</taxon>
    </lineage>
</organism>
<dbReference type="EC" id="2.2.1.9" evidence="1"/>
<dbReference type="EMBL" id="AM711867">
    <property type="protein sequence ID" value="CAN02897.1"/>
    <property type="molecule type" value="Genomic_DNA"/>
</dbReference>
<dbReference type="RefSeq" id="WP_012039500.1">
    <property type="nucleotide sequence ID" value="NC_009480.1"/>
</dbReference>
<dbReference type="SMR" id="A5CUV9"/>
<dbReference type="KEGG" id="cmi:CMM_2812"/>
<dbReference type="eggNOG" id="COG1165">
    <property type="taxonomic scope" value="Bacteria"/>
</dbReference>
<dbReference type="HOGENOM" id="CLU_006051_4_0_11"/>
<dbReference type="OrthoDB" id="9791859at2"/>
<dbReference type="UniPathway" id="UPA00079"/>
<dbReference type="UniPathway" id="UPA01057">
    <property type="reaction ID" value="UER00164"/>
</dbReference>
<dbReference type="Proteomes" id="UP000001564">
    <property type="component" value="Chromosome"/>
</dbReference>
<dbReference type="GO" id="GO:0070204">
    <property type="term" value="F:2-succinyl-5-enolpyruvyl-6-hydroxy-3-cyclohexene-1-carboxylic-acid synthase activity"/>
    <property type="evidence" value="ECO:0007669"/>
    <property type="project" value="UniProtKB-UniRule"/>
</dbReference>
<dbReference type="GO" id="GO:0000287">
    <property type="term" value="F:magnesium ion binding"/>
    <property type="evidence" value="ECO:0007669"/>
    <property type="project" value="UniProtKB-UniRule"/>
</dbReference>
<dbReference type="GO" id="GO:0030145">
    <property type="term" value="F:manganese ion binding"/>
    <property type="evidence" value="ECO:0007669"/>
    <property type="project" value="UniProtKB-UniRule"/>
</dbReference>
<dbReference type="GO" id="GO:0030976">
    <property type="term" value="F:thiamine pyrophosphate binding"/>
    <property type="evidence" value="ECO:0007669"/>
    <property type="project" value="UniProtKB-UniRule"/>
</dbReference>
<dbReference type="GO" id="GO:0009234">
    <property type="term" value="P:menaquinone biosynthetic process"/>
    <property type="evidence" value="ECO:0007669"/>
    <property type="project" value="UniProtKB-UniRule"/>
</dbReference>
<dbReference type="CDD" id="cd07037">
    <property type="entry name" value="TPP_PYR_MenD"/>
    <property type="match status" value="1"/>
</dbReference>
<dbReference type="CDD" id="cd02009">
    <property type="entry name" value="TPP_SHCHC_synthase"/>
    <property type="match status" value="1"/>
</dbReference>
<dbReference type="Gene3D" id="3.40.50.970">
    <property type="match status" value="2"/>
</dbReference>
<dbReference type="Gene3D" id="3.40.50.1220">
    <property type="entry name" value="TPP-binding domain"/>
    <property type="match status" value="1"/>
</dbReference>
<dbReference type="HAMAP" id="MF_01659">
    <property type="entry name" value="MenD"/>
    <property type="match status" value="1"/>
</dbReference>
<dbReference type="InterPro" id="IPR004433">
    <property type="entry name" value="MenaQ_synth_MenD"/>
</dbReference>
<dbReference type="InterPro" id="IPR029061">
    <property type="entry name" value="THDP-binding"/>
</dbReference>
<dbReference type="InterPro" id="IPR012001">
    <property type="entry name" value="Thiamin_PyroP_enz_TPP-bd_dom"/>
</dbReference>
<dbReference type="InterPro" id="IPR011766">
    <property type="entry name" value="TPP_enzyme_TPP-bd"/>
</dbReference>
<dbReference type="NCBIfam" id="TIGR00173">
    <property type="entry name" value="menD"/>
    <property type="match status" value="1"/>
</dbReference>
<dbReference type="PANTHER" id="PTHR42916">
    <property type="entry name" value="2-SUCCINYL-5-ENOLPYRUVYL-6-HYDROXY-3-CYCLOHEXENE-1-CARBOXYLATE SYNTHASE"/>
    <property type="match status" value="1"/>
</dbReference>
<dbReference type="PANTHER" id="PTHR42916:SF1">
    <property type="entry name" value="PROTEIN PHYLLO, CHLOROPLASTIC"/>
    <property type="match status" value="1"/>
</dbReference>
<dbReference type="Pfam" id="PF02775">
    <property type="entry name" value="TPP_enzyme_C"/>
    <property type="match status" value="1"/>
</dbReference>
<dbReference type="Pfam" id="PF02776">
    <property type="entry name" value="TPP_enzyme_N"/>
    <property type="match status" value="1"/>
</dbReference>
<dbReference type="PIRSF" id="PIRSF004983">
    <property type="entry name" value="MenD"/>
    <property type="match status" value="1"/>
</dbReference>
<dbReference type="SUPFAM" id="SSF52518">
    <property type="entry name" value="Thiamin diphosphate-binding fold (THDP-binding)"/>
    <property type="match status" value="2"/>
</dbReference>
<feature type="chain" id="PRO_0000341724" description="2-succinyl-5-enolpyruvyl-6-hydroxy-3-cyclohexene-1-carboxylate synthase">
    <location>
        <begin position="1"/>
        <end position="588"/>
    </location>
</feature>
<feature type="region of interest" description="Disordered" evidence="2">
    <location>
        <begin position="1"/>
        <end position="22"/>
    </location>
</feature>
<name>MEND_CLAM3</name>